<gene>
    <name evidence="1" type="primary">atpA3</name>
    <name type="ordered locus">Bxeno_C0042</name>
    <name type="ORF">Bxe_C0043</name>
</gene>
<proteinExistence type="inferred from homology"/>
<dbReference type="EC" id="7.1.2.2" evidence="1"/>
<dbReference type="EMBL" id="CP000272">
    <property type="protein sequence ID" value="ABE35970.1"/>
    <property type="molecule type" value="Genomic_DNA"/>
</dbReference>
<dbReference type="RefSeq" id="WP_011493230.1">
    <property type="nucleotide sequence ID" value="NC_007953.1"/>
</dbReference>
<dbReference type="SMR" id="Q13IW9"/>
<dbReference type="STRING" id="266265.Bxe_C0043"/>
<dbReference type="KEGG" id="bxb:DR64_8382"/>
<dbReference type="KEGG" id="bxe:Bxe_C0043"/>
<dbReference type="PATRIC" id="fig|266265.5.peg.7822"/>
<dbReference type="eggNOG" id="COG0056">
    <property type="taxonomic scope" value="Bacteria"/>
</dbReference>
<dbReference type="OrthoDB" id="9803053at2"/>
<dbReference type="Proteomes" id="UP000001817">
    <property type="component" value="Chromosome 3"/>
</dbReference>
<dbReference type="GO" id="GO:0005886">
    <property type="term" value="C:plasma membrane"/>
    <property type="evidence" value="ECO:0007669"/>
    <property type="project" value="UniProtKB-SubCell"/>
</dbReference>
<dbReference type="GO" id="GO:0045259">
    <property type="term" value="C:proton-transporting ATP synthase complex"/>
    <property type="evidence" value="ECO:0007669"/>
    <property type="project" value="UniProtKB-KW"/>
</dbReference>
<dbReference type="GO" id="GO:0043531">
    <property type="term" value="F:ADP binding"/>
    <property type="evidence" value="ECO:0007669"/>
    <property type="project" value="TreeGrafter"/>
</dbReference>
<dbReference type="GO" id="GO:0005524">
    <property type="term" value="F:ATP binding"/>
    <property type="evidence" value="ECO:0007669"/>
    <property type="project" value="UniProtKB-UniRule"/>
</dbReference>
<dbReference type="GO" id="GO:0046933">
    <property type="term" value="F:proton-transporting ATP synthase activity, rotational mechanism"/>
    <property type="evidence" value="ECO:0007669"/>
    <property type="project" value="UniProtKB-UniRule"/>
</dbReference>
<dbReference type="CDD" id="cd18113">
    <property type="entry name" value="ATP-synt_F1_alpha_C"/>
    <property type="match status" value="1"/>
</dbReference>
<dbReference type="CDD" id="cd18116">
    <property type="entry name" value="ATP-synt_F1_alpha_N"/>
    <property type="match status" value="1"/>
</dbReference>
<dbReference type="CDD" id="cd01132">
    <property type="entry name" value="F1-ATPase_alpha_CD"/>
    <property type="match status" value="1"/>
</dbReference>
<dbReference type="FunFam" id="3.40.50.300:FF:000002">
    <property type="entry name" value="ATP synthase subunit alpha"/>
    <property type="match status" value="1"/>
</dbReference>
<dbReference type="Gene3D" id="2.40.30.20">
    <property type="match status" value="1"/>
</dbReference>
<dbReference type="Gene3D" id="1.20.150.20">
    <property type="entry name" value="ATP synthase alpha/beta chain, C-terminal domain"/>
    <property type="match status" value="1"/>
</dbReference>
<dbReference type="Gene3D" id="3.40.50.300">
    <property type="entry name" value="P-loop containing nucleotide triphosphate hydrolases"/>
    <property type="match status" value="1"/>
</dbReference>
<dbReference type="HAMAP" id="MF_01346">
    <property type="entry name" value="ATP_synth_alpha_bact"/>
    <property type="match status" value="1"/>
</dbReference>
<dbReference type="InterPro" id="IPR023366">
    <property type="entry name" value="ATP_synth_asu-like_sf"/>
</dbReference>
<dbReference type="InterPro" id="IPR000793">
    <property type="entry name" value="ATP_synth_asu_C"/>
</dbReference>
<dbReference type="InterPro" id="IPR038376">
    <property type="entry name" value="ATP_synth_asu_C_sf"/>
</dbReference>
<dbReference type="InterPro" id="IPR033732">
    <property type="entry name" value="ATP_synth_F1_a_nt-bd_dom"/>
</dbReference>
<dbReference type="InterPro" id="IPR005294">
    <property type="entry name" value="ATP_synth_F1_asu"/>
</dbReference>
<dbReference type="InterPro" id="IPR020003">
    <property type="entry name" value="ATPase_a/bsu_AS"/>
</dbReference>
<dbReference type="InterPro" id="IPR004100">
    <property type="entry name" value="ATPase_F1/V1/A1_a/bsu_N"/>
</dbReference>
<dbReference type="InterPro" id="IPR036121">
    <property type="entry name" value="ATPase_F1/V1/A1_a/bsu_N_sf"/>
</dbReference>
<dbReference type="InterPro" id="IPR000194">
    <property type="entry name" value="ATPase_F1/V1/A1_a/bsu_nucl-bd"/>
</dbReference>
<dbReference type="InterPro" id="IPR027417">
    <property type="entry name" value="P-loop_NTPase"/>
</dbReference>
<dbReference type="NCBIfam" id="TIGR00962">
    <property type="entry name" value="atpA"/>
    <property type="match status" value="1"/>
</dbReference>
<dbReference type="NCBIfam" id="NF009884">
    <property type="entry name" value="PRK13343.1"/>
    <property type="match status" value="1"/>
</dbReference>
<dbReference type="PANTHER" id="PTHR48082">
    <property type="entry name" value="ATP SYNTHASE SUBUNIT ALPHA, MITOCHONDRIAL"/>
    <property type="match status" value="1"/>
</dbReference>
<dbReference type="PANTHER" id="PTHR48082:SF2">
    <property type="entry name" value="ATP SYNTHASE SUBUNIT ALPHA, MITOCHONDRIAL"/>
    <property type="match status" value="1"/>
</dbReference>
<dbReference type="Pfam" id="PF00006">
    <property type="entry name" value="ATP-synt_ab"/>
    <property type="match status" value="1"/>
</dbReference>
<dbReference type="Pfam" id="PF00306">
    <property type="entry name" value="ATP-synt_ab_C"/>
    <property type="match status" value="1"/>
</dbReference>
<dbReference type="Pfam" id="PF02874">
    <property type="entry name" value="ATP-synt_ab_N"/>
    <property type="match status" value="1"/>
</dbReference>
<dbReference type="SUPFAM" id="SSF47917">
    <property type="entry name" value="C-terminal domain of alpha and beta subunits of F1 ATP synthase"/>
    <property type="match status" value="1"/>
</dbReference>
<dbReference type="SUPFAM" id="SSF50615">
    <property type="entry name" value="N-terminal domain of alpha and beta subunits of F1 ATP synthase"/>
    <property type="match status" value="1"/>
</dbReference>
<dbReference type="SUPFAM" id="SSF52540">
    <property type="entry name" value="P-loop containing nucleoside triphosphate hydrolases"/>
    <property type="match status" value="1"/>
</dbReference>
<dbReference type="PROSITE" id="PS00152">
    <property type="entry name" value="ATPASE_ALPHA_BETA"/>
    <property type="match status" value="1"/>
</dbReference>
<name>ATPA3_PARXL</name>
<reference key="1">
    <citation type="journal article" date="2006" name="Proc. Natl. Acad. Sci. U.S.A.">
        <title>Burkholderia xenovorans LB400 harbors a multi-replicon, 9.73-Mbp genome shaped for versatility.</title>
        <authorList>
            <person name="Chain P.S.G."/>
            <person name="Denef V.J."/>
            <person name="Konstantinidis K.T."/>
            <person name="Vergez L.M."/>
            <person name="Agullo L."/>
            <person name="Reyes V.L."/>
            <person name="Hauser L."/>
            <person name="Cordova M."/>
            <person name="Gomez L."/>
            <person name="Gonzalez M."/>
            <person name="Land M."/>
            <person name="Lao V."/>
            <person name="Larimer F."/>
            <person name="LiPuma J.J."/>
            <person name="Mahenthiralingam E."/>
            <person name="Malfatti S.A."/>
            <person name="Marx C.J."/>
            <person name="Parnell J.J."/>
            <person name="Ramette A."/>
            <person name="Richardson P."/>
            <person name="Seeger M."/>
            <person name="Smith D."/>
            <person name="Spilker T."/>
            <person name="Sul W.J."/>
            <person name="Tsoi T.V."/>
            <person name="Ulrich L.E."/>
            <person name="Zhulin I.B."/>
            <person name="Tiedje J.M."/>
        </authorList>
    </citation>
    <scope>NUCLEOTIDE SEQUENCE [LARGE SCALE GENOMIC DNA]</scope>
    <source>
        <strain>LB400</strain>
    </source>
</reference>
<feature type="chain" id="PRO_0000256085" description="ATP synthase subunit alpha 3">
    <location>
        <begin position="1"/>
        <end position="530"/>
    </location>
</feature>
<feature type="region of interest" description="Disordered" evidence="2">
    <location>
        <begin position="507"/>
        <end position="530"/>
    </location>
</feature>
<feature type="compositionally biased region" description="Low complexity" evidence="2">
    <location>
        <begin position="507"/>
        <end position="522"/>
    </location>
</feature>
<feature type="binding site" evidence="1">
    <location>
        <begin position="174"/>
        <end position="181"/>
    </location>
    <ligand>
        <name>ATP</name>
        <dbReference type="ChEBI" id="CHEBI:30616"/>
    </ligand>
</feature>
<feature type="site" description="Required for activity" evidence="1">
    <location>
        <position position="367"/>
    </location>
</feature>
<comment type="function">
    <text evidence="1">Produces ATP from ADP in the presence of a proton gradient across the membrane. The alpha chain is a regulatory subunit.</text>
</comment>
<comment type="catalytic activity">
    <reaction evidence="1">
        <text>ATP + H2O + 4 H(+)(in) = ADP + phosphate + 5 H(+)(out)</text>
        <dbReference type="Rhea" id="RHEA:57720"/>
        <dbReference type="ChEBI" id="CHEBI:15377"/>
        <dbReference type="ChEBI" id="CHEBI:15378"/>
        <dbReference type="ChEBI" id="CHEBI:30616"/>
        <dbReference type="ChEBI" id="CHEBI:43474"/>
        <dbReference type="ChEBI" id="CHEBI:456216"/>
        <dbReference type="EC" id="7.1.2.2"/>
    </reaction>
</comment>
<comment type="subunit">
    <text evidence="1">F-type ATPases have 2 components, CF(1) - the catalytic core - and CF(0) - the membrane proton channel. CF(1) has five subunits: alpha(3), beta(3), gamma(1), delta(1), epsilon(1). CF(0) has three main subunits: a(1), b(2) and c(9-12). The alpha and beta chains form an alternating ring which encloses part of the gamma chain. CF(1) is attached to CF(0) by a central stalk formed by the gamma and epsilon chains, while a peripheral stalk is formed by the delta and b chains.</text>
</comment>
<comment type="subcellular location">
    <subcellularLocation>
        <location evidence="1">Cell inner membrane</location>
        <topology evidence="1">Peripheral membrane protein</topology>
    </subcellularLocation>
</comment>
<comment type="similarity">
    <text evidence="1">Belongs to the ATPase alpha/beta chains family.</text>
</comment>
<keyword id="KW-0066">ATP synthesis</keyword>
<keyword id="KW-0067">ATP-binding</keyword>
<keyword id="KW-0997">Cell inner membrane</keyword>
<keyword id="KW-1003">Cell membrane</keyword>
<keyword id="KW-0139">CF(1)</keyword>
<keyword id="KW-0375">Hydrogen ion transport</keyword>
<keyword id="KW-0406">Ion transport</keyword>
<keyword id="KW-0472">Membrane</keyword>
<keyword id="KW-0547">Nucleotide-binding</keyword>
<keyword id="KW-1185">Reference proteome</keyword>
<keyword id="KW-1278">Translocase</keyword>
<keyword id="KW-0813">Transport</keyword>
<protein>
    <recommendedName>
        <fullName evidence="1">ATP synthase subunit alpha 3</fullName>
        <ecNumber evidence="1">7.1.2.2</ecNumber>
    </recommendedName>
    <alternativeName>
        <fullName evidence="1">ATP synthase F1 sector subunit alpha 3</fullName>
    </alternativeName>
    <alternativeName>
        <fullName evidence="1">F-ATPase subunit alpha 3</fullName>
    </alternativeName>
</protein>
<sequence>MTQTTPDSREDAWLERSRATLAKAQPGARAEAVGRVEHVADGIALVSGLPDVRLNELLRFEGDRFGFALTLDADTIGAVLLDDADAITAGSIVTGTGQVVQVPVGPGLTGRVVDPLGRPLDGRGAVHADARMPIERPAPSIIERDLVAEPLATGILLIDALFAIGRGQRELIIGDRATGKTAIAIDAIVNQKNSDVICVYVAIGQRASAVERVIAAVREHGAPERCVFVFASSAASAGLQWIAPFSAMTIAEYFRDRGQHALVVIDDLTRHAATHRELALLTREPPGREAYPGDIFYLHARLLERAAKLSPERGGGSLTALPIAETDAGNLSAYIPTNLISITDGQIVLDTGLFAANQRPAIDVGLSVSRVGGKAQMPALRNVSGRLRLDYSQFLELEMFSRFGGLTEARVKAQVVRGERIRALITQPRFTPLRPVDEVALLGALAEGVFDALPVDLLPAIRTRVAAHLDAHGGNAGAVLEDTGTLDATAQALLVAAVRTLAQDCATASATAPPDPPAASAAELPQPDSP</sequence>
<evidence type="ECO:0000255" key="1">
    <source>
        <dbReference type="HAMAP-Rule" id="MF_01346"/>
    </source>
</evidence>
<evidence type="ECO:0000256" key="2">
    <source>
        <dbReference type="SAM" id="MobiDB-lite"/>
    </source>
</evidence>
<organism>
    <name type="scientific">Paraburkholderia xenovorans (strain LB400)</name>
    <dbReference type="NCBI Taxonomy" id="266265"/>
    <lineage>
        <taxon>Bacteria</taxon>
        <taxon>Pseudomonadati</taxon>
        <taxon>Pseudomonadota</taxon>
        <taxon>Betaproteobacteria</taxon>
        <taxon>Burkholderiales</taxon>
        <taxon>Burkholderiaceae</taxon>
        <taxon>Paraburkholderia</taxon>
    </lineage>
</organism>
<accession>Q13IW9</accession>